<dbReference type="EC" id="3.1.26.n2" evidence="1"/>
<dbReference type="EMBL" id="AB081473">
    <property type="protein sequence ID" value="BAC15768.1"/>
    <property type="molecule type" value="mRNA"/>
</dbReference>
<dbReference type="EMBL" id="AK154436">
    <property type="protein sequence ID" value="BAE32586.1"/>
    <property type="molecule type" value="mRNA"/>
</dbReference>
<dbReference type="EMBL" id="AK171118">
    <property type="protein sequence ID" value="BAE42260.1"/>
    <property type="molecule type" value="mRNA"/>
</dbReference>
<dbReference type="EMBL" id="AL606976">
    <property type="status" value="NOT_ANNOTATED_CDS"/>
    <property type="molecule type" value="Genomic_DNA"/>
</dbReference>
<dbReference type="EMBL" id="CH466552">
    <property type="protein sequence ID" value="EDL30287.1"/>
    <property type="molecule type" value="Genomic_DNA"/>
</dbReference>
<dbReference type="EMBL" id="BC137964">
    <property type="protein sequence ID" value="AAI37965.1"/>
    <property type="molecule type" value="mRNA"/>
</dbReference>
<dbReference type="CCDS" id="CCDS18652.1"/>
<dbReference type="RefSeq" id="NP_700451.2">
    <property type="nucleotide sequence ID" value="NM_153402.2"/>
</dbReference>
<dbReference type="SMR" id="Q8CJF9"/>
<dbReference type="BioGRID" id="229499">
    <property type="interactions" value="20"/>
</dbReference>
<dbReference type="FunCoup" id="Q8CJF9">
    <property type="interactions" value="3095"/>
</dbReference>
<dbReference type="IntAct" id="Q8CJF9">
    <property type="interactions" value="3"/>
</dbReference>
<dbReference type="MINT" id="Q8CJF9"/>
<dbReference type="STRING" id="10090.ENSMUSP00000066633"/>
<dbReference type="iPTMnet" id="Q8CJF9"/>
<dbReference type="PhosphoSitePlus" id="Q8CJF9"/>
<dbReference type="PaxDb" id="10090-ENSMUSP00000066633"/>
<dbReference type="PeptideAtlas" id="Q8CJF9"/>
<dbReference type="ProteomicsDB" id="282030"/>
<dbReference type="Pumba" id="Q8CJF9"/>
<dbReference type="Antibodypedia" id="31609">
    <property type="antibodies" value="183 antibodies from 31 providers"/>
</dbReference>
<dbReference type="DNASU" id="214150"/>
<dbReference type="Ensembl" id="ENSMUST00000069097.13">
    <property type="protein sequence ID" value="ENSMUSP00000066633.7"/>
    <property type="gene ID" value="ENSMUSG00000028842.16"/>
</dbReference>
<dbReference type="GeneID" id="214150"/>
<dbReference type="KEGG" id="mmu:214150"/>
<dbReference type="UCSC" id="uc008uth.2">
    <property type="organism name" value="mouse"/>
</dbReference>
<dbReference type="AGR" id="MGI:2446634"/>
<dbReference type="CTD" id="192669"/>
<dbReference type="MGI" id="MGI:2446634">
    <property type="gene designation" value="Ago3"/>
</dbReference>
<dbReference type="VEuPathDB" id="HostDB:ENSMUSG00000028842"/>
<dbReference type="eggNOG" id="KOG1041">
    <property type="taxonomic scope" value="Eukaryota"/>
</dbReference>
<dbReference type="GeneTree" id="ENSGT00940000155256"/>
<dbReference type="HOGENOM" id="CLU_004544_4_3_1"/>
<dbReference type="InParanoid" id="Q8CJF9"/>
<dbReference type="OMA" id="RGRCYIH"/>
<dbReference type="OrthoDB" id="10252740at2759"/>
<dbReference type="PhylomeDB" id="Q8CJF9"/>
<dbReference type="TreeFam" id="TF101510"/>
<dbReference type="Reactome" id="R-MMU-203927">
    <property type="pathway name" value="MicroRNA (miRNA) biogenesis"/>
</dbReference>
<dbReference type="Reactome" id="R-MMU-426486">
    <property type="pathway name" value="Small interfering RNA (siRNA) biogenesis"/>
</dbReference>
<dbReference type="Reactome" id="R-MMU-426496">
    <property type="pathway name" value="Post-transcriptional silencing by small RNAs"/>
</dbReference>
<dbReference type="BioGRID-ORCS" id="214150">
    <property type="hits" value="0 hits in 76 CRISPR screens"/>
</dbReference>
<dbReference type="ChiTaRS" id="Ago3">
    <property type="organism name" value="mouse"/>
</dbReference>
<dbReference type="PRO" id="PR:Q8CJF9"/>
<dbReference type="Proteomes" id="UP000000589">
    <property type="component" value="Chromosome 4"/>
</dbReference>
<dbReference type="RNAct" id="Q8CJF9">
    <property type="molecule type" value="protein"/>
</dbReference>
<dbReference type="Bgee" id="ENSMUSG00000028842">
    <property type="expression patterns" value="Expressed in animal zygote and 218 other cell types or tissues"/>
</dbReference>
<dbReference type="ExpressionAtlas" id="Q8CJF9">
    <property type="expression patterns" value="baseline and differential"/>
</dbReference>
<dbReference type="GO" id="GO:0000794">
    <property type="term" value="C:condensed nuclear chromosome"/>
    <property type="evidence" value="ECO:0000314"/>
    <property type="project" value="MGI"/>
</dbReference>
<dbReference type="GO" id="GO:0005829">
    <property type="term" value="C:cytosol"/>
    <property type="evidence" value="ECO:0007669"/>
    <property type="project" value="Ensembl"/>
</dbReference>
<dbReference type="GO" id="GO:0005654">
    <property type="term" value="C:nucleoplasm"/>
    <property type="evidence" value="ECO:0007669"/>
    <property type="project" value="Ensembl"/>
</dbReference>
<dbReference type="GO" id="GO:0000932">
    <property type="term" value="C:P-body"/>
    <property type="evidence" value="ECO:0007669"/>
    <property type="project" value="UniProtKB-SubCell"/>
</dbReference>
<dbReference type="GO" id="GO:0016442">
    <property type="term" value="C:RISC complex"/>
    <property type="evidence" value="ECO:0000314"/>
    <property type="project" value="MGI"/>
</dbReference>
<dbReference type="GO" id="GO:0070578">
    <property type="term" value="C:RISC-loading complex"/>
    <property type="evidence" value="ECO:0007669"/>
    <property type="project" value="Ensembl"/>
</dbReference>
<dbReference type="GO" id="GO:0003725">
    <property type="term" value="F:double-stranded RNA binding"/>
    <property type="evidence" value="ECO:0007669"/>
    <property type="project" value="Ensembl"/>
</dbReference>
<dbReference type="GO" id="GO:0090624">
    <property type="term" value="F:endoribonuclease activity, cleaving miRNA-paired mRNA"/>
    <property type="evidence" value="ECO:0000250"/>
    <property type="project" value="UniProtKB"/>
</dbReference>
<dbReference type="GO" id="GO:0046872">
    <property type="term" value="F:metal ion binding"/>
    <property type="evidence" value="ECO:0007669"/>
    <property type="project" value="UniProtKB-KW"/>
</dbReference>
<dbReference type="GO" id="GO:0035198">
    <property type="term" value="F:miRNA binding"/>
    <property type="evidence" value="ECO:0007669"/>
    <property type="project" value="UniProtKB-UniRule"/>
</dbReference>
<dbReference type="GO" id="GO:0003723">
    <property type="term" value="F:RNA binding"/>
    <property type="evidence" value="ECO:0000314"/>
    <property type="project" value="MGI"/>
</dbReference>
<dbReference type="GO" id="GO:0004521">
    <property type="term" value="F:RNA endonuclease activity"/>
    <property type="evidence" value="ECO:0000250"/>
    <property type="project" value="UniProtKB"/>
</dbReference>
<dbReference type="GO" id="GO:0003727">
    <property type="term" value="F:single-stranded RNA binding"/>
    <property type="evidence" value="ECO:0007669"/>
    <property type="project" value="Ensembl"/>
</dbReference>
<dbReference type="GO" id="GO:0035278">
    <property type="term" value="P:miRNA-mediated gene silencing by inhibition of translation"/>
    <property type="evidence" value="ECO:0000250"/>
    <property type="project" value="UniProtKB"/>
</dbReference>
<dbReference type="GO" id="GO:0006402">
    <property type="term" value="P:mRNA catabolic process"/>
    <property type="evidence" value="ECO:0000250"/>
    <property type="project" value="UniProtKB"/>
</dbReference>
<dbReference type="GO" id="GO:0010628">
    <property type="term" value="P:positive regulation of gene expression"/>
    <property type="evidence" value="ECO:0000315"/>
    <property type="project" value="BHF-UCL"/>
</dbReference>
<dbReference type="GO" id="GO:1901224">
    <property type="term" value="P:positive regulation of non-canonical NF-kappaB signal transduction"/>
    <property type="evidence" value="ECO:0000315"/>
    <property type="project" value="BHF-UCL"/>
</dbReference>
<dbReference type="GO" id="GO:0031054">
    <property type="term" value="P:pre-miRNA processing"/>
    <property type="evidence" value="ECO:0007669"/>
    <property type="project" value="Ensembl"/>
</dbReference>
<dbReference type="GO" id="GO:0072091">
    <property type="term" value="P:regulation of stem cell proliferation"/>
    <property type="evidence" value="ECO:0007669"/>
    <property type="project" value="Ensembl"/>
</dbReference>
<dbReference type="GO" id="GO:0070922">
    <property type="term" value="P:RISC complex assembly"/>
    <property type="evidence" value="ECO:0007669"/>
    <property type="project" value="Ensembl"/>
</dbReference>
<dbReference type="CDD" id="cd02846">
    <property type="entry name" value="PAZ_argonaute_like"/>
    <property type="match status" value="1"/>
</dbReference>
<dbReference type="CDD" id="cd04657">
    <property type="entry name" value="Piwi_ago-like"/>
    <property type="match status" value="1"/>
</dbReference>
<dbReference type="FunFam" id="2.170.260.10:FF:000001">
    <property type="entry name" value="Protein argonaute-2"/>
    <property type="match status" value="1"/>
</dbReference>
<dbReference type="FunFam" id="3.30.420.10:FF:000001">
    <property type="entry name" value="Protein argonaute-2"/>
    <property type="match status" value="1"/>
</dbReference>
<dbReference type="FunFam" id="3.40.50.2300:FF:000005">
    <property type="entry name" value="Protein argonaute-2"/>
    <property type="match status" value="1"/>
</dbReference>
<dbReference type="Gene3D" id="3.40.50.2300">
    <property type="match status" value="1"/>
</dbReference>
<dbReference type="Gene3D" id="2.170.260.10">
    <property type="entry name" value="paz domain"/>
    <property type="match status" value="1"/>
</dbReference>
<dbReference type="Gene3D" id="3.30.420.10">
    <property type="entry name" value="Ribonuclease H-like superfamily/Ribonuclease H"/>
    <property type="match status" value="1"/>
</dbReference>
<dbReference type="HAMAP" id="MF_03032">
    <property type="entry name" value="AGO3"/>
    <property type="match status" value="1"/>
</dbReference>
<dbReference type="InterPro" id="IPR028603">
    <property type="entry name" value="AGO3"/>
</dbReference>
<dbReference type="InterPro" id="IPR014811">
    <property type="entry name" value="ArgoL1"/>
</dbReference>
<dbReference type="InterPro" id="IPR032472">
    <property type="entry name" value="ArgoL2"/>
</dbReference>
<dbReference type="InterPro" id="IPR032473">
    <property type="entry name" value="Argonaute_Mid_dom"/>
</dbReference>
<dbReference type="InterPro" id="IPR032474">
    <property type="entry name" value="Argonaute_N"/>
</dbReference>
<dbReference type="InterPro" id="IPR003100">
    <property type="entry name" value="PAZ_dom"/>
</dbReference>
<dbReference type="InterPro" id="IPR036085">
    <property type="entry name" value="PAZ_dom_sf"/>
</dbReference>
<dbReference type="InterPro" id="IPR003165">
    <property type="entry name" value="Piwi"/>
</dbReference>
<dbReference type="InterPro" id="IPR045246">
    <property type="entry name" value="Piwi_ago-like"/>
</dbReference>
<dbReference type="InterPro" id="IPR012337">
    <property type="entry name" value="RNaseH-like_sf"/>
</dbReference>
<dbReference type="InterPro" id="IPR036397">
    <property type="entry name" value="RNaseH_sf"/>
</dbReference>
<dbReference type="PANTHER" id="PTHR22891">
    <property type="entry name" value="EUKARYOTIC TRANSLATION INITIATION FACTOR 2C"/>
    <property type="match status" value="1"/>
</dbReference>
<dbReference type="Pfam" id="PF08699">
    <property type="entry name" value="ArgoL1"/>
    <property type="match status" value="1"/>
</dbReference>
<dbReference type="Pfam" id="PF16488">
    <property type="entry name" value="ArgoL2"/>
    <property type="match status" value="1"/>
</dbReference>
<dbReference type="Pfam" id="PF16487">
    <property type="entry name" value="ArgoMid"/>
    <property type="match status" value="1"/>
</dbReference>
<dbReference type="Pfam" id="PF16486">
    <property type="entry name" value="ArgoN"/>
    <property type="match status" value="1"/>
</dbReference>
<dbReference type="Pfam" id="PF02170">
    <property type="entry name" value="PAZ"/>
    <property type="match status" value="1"/>
</dbReference>
<dbReference type="Pfam" id="PF02171">
    <property type="entry name" value="Piwi"/>
    <property type="match status" value="1"/>
</dbReference>
<dbReference type="SMART" id="SM01163">
    <property type="entry name" value="DUF1785"/>
    <property type="match status" value="1"/>
</dbReference>
<dbReference type="SMART" id="SM00949">
    <property type="entry name" value="PAZ"/>
    <property type="match status" value="1"/>
</dbReference>
<dbReference type="SMART" id="SM00950">
    <property type="entry name" value="Piwi"/>
    <property type="match status" value="1"/>
</dbReference>
<dbReference type="SUPFAM" id="SSF101690">
    <property type="entry name" value="PAZ domain"/>
    <property type="match status" value="1"/>
</dbReference>
<dbReference type="SUPFAM" id="SSF53098">
    <property type="entry name" value="Ribonuclease H-like"/>
    <property type="match status" value="1"/>
</dbReference>
<dbReference type="PROSITE" id="PS50821">
    <property type="entry name" value="PAZ"/>
    <property type="match status" value="1"/>
</dbReference>
<dbReference type="PROSITE" id="PS50822">
    <property type="entry name" value="PIWI"/>
    <property type="match status" value="1"/>
</dbReference>
<sequence length="860" mass="97277">MEIGSAGPIGAQPLFIVPRRPGYGTMGKPIKLLANCFQVEIPKIDVYLYEVDIKPDKCPRRVNREVVDSMVQHFKVTIFGDRRPVYDGKRSLYTANPLPVATTGVDLDVTLPGEGGKDRPFKVSVKFVSRVSWHLLHEALAGGTLPEPLELDKPVSTNPVHAVDVVLRHLPSMKYTPVGRSFFSAPEGYDHPLGGGREVWFGFHQSVRPAMWKMMLNIDVSATAFYKAQPVIQFMCEVLDIHNIDEQPRPLTDSHRVKFTKEIKGLKVEVTHCGTMRRKYRVCNVTRRPASHQTFPLQLENGQTVERTVAQYFREKYTLQLKYPHLPCLQVGQEQKHTYLPLEVCNIVAGQRCIKKLTDNQTSTMIKATARSAPDRQEEISRLVRSANYETDPFVQEFQFKVRDEMAHVTGRVLPAPMLQYGGRNRTVATPSHGVWDMRGKQFHTGVEIKMWAIACFATQRQCREEILKGFTDQLRKISKDAGMPIQGQPCFCKYAQGADSVEPMFRHLKNTYSGLQLIIVILPGKTPVYAEVKRVGDTLLGMATQCVQVKNVIKTSPQTLSNLCLKINVKLGGINNILVPHQRPSVFQQPVIFLGADVTHPPAGDGKKPSIAAVVGSMDAHPSRYCATVRVQRPRQEIIQDLASMVRELLIQFYKSTRFKPTRIIFYRDGVSEGQFRQVLYYELLAIREACISLEKDYQPGITYIVVQKRHHTRLFCADRTERVGRSGNIPAGTTVDTDITHPYEFDFYLCSHAGIQGTSRPSHYHVLWDDNFFTADELQLLTYQLCHTYVRCTRSVSIPAPAYYAHLVAFRARYHLVDKEHDSAEGSHVSGQSNGRDPQALAKAVQIHQDTLRTMYFA</sequence>
<reference key="1">
    <citation type="journal article" date="2003" name="Curr. Biol.">
        <title>Short-interfering-RNA-mediated gene silencing in mammalian cells requires Dicer and eIF2C translation initiation factors.</title>
        <authorList>
            <person name="Doi N."/>
            <person name="Zenno S."/>
            <person name="Ueda R."/>
            <person name="Ohki-Hamazaki H."/>
            <person name="Ui-Tei K."/>
            <person name="Saigo K."/>
        </authorList>
    </citation>
    <scope>NUCLEOTIDE SEQUENCE [MRNA]</scope>
</reference>
<reference key="2">
    <citation type="journal article" date="2005" name="Science">
        <title>The transcriptional landscape of the mammalian genome.</title>
        <authorList>
            <person name="Carninci P."/>
            <person name="Kasukawa T."/>
            <person name="Katayama S."/>
            <person name="Gough J."/>
            <person name="Frith M.C."/>
            <person name="Maeda N."/>
            <person name="Oyama R."/>
            <person name="Ravasi T."/>
            <person name="Lenhard B."/>
            <person name="Wells C."/>
            <person name="Kodzius R."/>
            <person name="Shimokawa K."/>
            <person name="Bajic V.B."/>
            <person name="Brenner S.E."/>
            <person name="Batalov S."/>
            <person name="Forrest A.R."/>
            <person name="Zavolan M."/>
            <person name="Davis M.J."/>
            <person name="Wilming L.G."/>
            <person name="Aidinis V."/>
            <person name="Allen J.E."/>
            <person name="Ambesi-Impiombato A."/>
            <person name="Apweiler R."/>
            <person name="Aturaliya R.N."/>
            <person name="Bailey T.L."/>
            <person name="Bansal M."/>
            <person name="Baxter L."/>
            <person name="Beisel K.W."/>
            <person name="Bersano T."/>
            <person name="Bono H."/>
            <person name="Chalk A.M."/>
            <person name="Chiu K.P."/>
            <person name="Choudhary V."/>
            <person name="Christoffels A."/>
            <person name="Clutterbuck D.R."/>
            <person name="Crowe M.L."/>
            <person name="Dalla E."/>
            <person name="Dalrymple B.P."/>
            <person name="de Bono B."/>
            <person name="Della Gatta G."/>
            <person name="di Bernardo D."/>
            <person name="Down T."/>
            <person name="Engstrom P."/>
            <person name="Fagiolini M."/>
            <person name="Faulkner G."/>
            <person name="Fletcher C.F."/>
            <person name="Fukushima T."/>
            <person name="Furuno M."/>
            <person name="Futaki S."/>
            <person name="Gariboldi M."/>
            <person name="Georgii-Hemming P."/>
            <person name="Gingeras T.R."/>
            <person name="Gojobori T."/>
            <person name="Green R.E."/>
            <person name="Gustincich S."/>
            <person name="Harbers M."/>
            <person name="Hayashi Y."/>
            <person name="Hensch T.K."/>
            <person name="Hirokawa N."/>
            <person name="Hill D."/>
            <person name="Huminiecki L."/>
            <person name="Iacono M."/>
            <person name="Ikeo K."/>
            <person name="Iwama A."/>
            <person name="Ishikawa T."/>
            <person name="Jakt M."/>
            <person name="Kanapin A."/>
            <person name="Katoh M."/>
            <person name="Kawasawa Y."/>
            <person name="Kelso J."/>
            <person name="Kitamura H."/>
            <person name="Kitano H."/>
            <person name="Kollias G."/>
            <person name="Krishnan S.P."/>
            <person name="Kruger A."/>
            <person name="Kummerfeld S.K."/>
            <person name="Kurochkin I.V."/>
            <person name="Lareau L.F."/>
            <person name="Lazarevic D."/>
            <person name="Lipovich L."/>
            <person name="Liu J."/>
            <person name="Liuni S."/>
            <person name="McWilliam S."/>
            <person name="Madan Babu M."/>
            <person name="Madera M."/>
            <person name="Marchionni L."/>
            <person name="Matsuda H."/>
            <person name="Matsuzawa S."/>
            <person name="Miki H."/>
            <person name="Mignone F."/>
            <person name="Miyake S."/>
            <person name="Morris K."/>
            <person name="Mottagui-Tabar S."/>
            <person name="Mulder N."/>
            <person name="Nakano N."/>
            <person name="Nakauchi H."/>
            <person name="Ng P."/>
            <person name="Nilsson R."/>
            <person name="Nishiguchi S."/>
            <person name="Nishikawa S."/>
            <person name="Nori F."/>
            <person name="Ohara O."/>
            <person name="Okazaki Y."/>
            <person name="Orlando V."/>
            <person name="Pang K.C."/>
            <person name="Pavan W.J."/>
            <person name="Pavesi G."/>
            <person name="Pesole G."/>
            <person name="Petrovsky N."/>
            <person name="Piazza S."/>
            <person name="Reed J."/>
            <person name="Reid J.F."/>
            <person name="Ring B.Z."/>
            <person name="Ringwald M."/>
            <person name="Rost B."/>
            <person name="Ruan Y."/>
            <person name="Salzberg S.L."/>
            <person name="Sandelin A."/>
            <person name="Schneider C."/>
            <person name="Schoenbach C."/>
            <person name="Sekiguchi K."/>
            <person name="Semple C.A."/>
            <person name="Seno S."/>
            <person name="Sessa L."/>
            <person name="Sheng Y."/>
            <person name="Shibata Y."/>
            <person name="Shimada H."/>
            <person name="Shimada K."/>
            <person name="Silva D."/>
            <person name="Sinclair B."/>
            <person name="Sperling S."/>
            <person name="Stupka E."/>
            <person name="Sugiura K."/>
            <person name="Sultana R."/>
            <person name="Takenaka Y."/>
            <person name="Taki K."/>
            <person name="Tammoja K."/>
            <person name="Tan S.L."/>
            <person name="Tang S."/>
            <person name="Taylor M.S."/>
            <person name="Tegner J."/>
            <person name="Teichmann S.A."/>
            <person name="Ueda H.R."/>
            <person name="van Nimwegen E."/>
            <person name="Verardo R."/>
            <person name="Wei C.L."/>
            <person name="Yagi K."/>
            <person name="Yamanishi H."/>
            <person name="Zabarovsky E."/>
            <person name="Zhu S."/>
            <person name="Zimmer A."/>
            <person name="Hide W."/>
            <person name="Bult C."/>
            <person name="Grimmond S.M."/>
            <person name="Teasdale R.D."/>
            <person name="Liu E.T."/>
            <person name="Brusic V."/>
            <person name="Quackenbush J."/>
            <person name="Wahlestedt C."/>
            <person name="Mattick J.S."/>
            <person name="Hume D.A."/>
            <person name="Kai C."/>
            <person name="Sasaki D."/>
            <person name="Tomaru Y."/>
            <person name="Fukuda S."/>
            <person name="Kanamori-Katayama M."/>
            <person name="Suzuki M."/>
            <person name="Aoki J."/>
            <person name="Arakawa T."/>
            <person name="Iida J."/>
            <person name="Imamura K."/>
            <person name="Itoh M."/>
            <person name="Kato T."/>
            <person name="Kawaji H."/>
            <person name="Kawagashira N."/>
            <person name="Kawashima T."/>
            <person name="Kojima M."/>
            <person name="Kondo S."/>
            <person name="Konno H."/>
            <person name="Nakano K."/>
            <person name="Ninomiya N."/>
            <person name="Nishio T."/>
            <person name="Okada M."/>
            <person name="Plessy C."/>
            <person name="Shibata K."/>
            <person name="Shiraki T."/>
            <person name="Suzuki S."/>
            <person name="Tagami M."/>
            <person name="Waki K."/>
            <person name="Watahiki A."/>
            <person name="Okamura-Oho Y."/>
            <person name="Suzuki H."/>
            <person name="Kawai J."/>
            <person name="Hayashizaki Y."/>
        </authorList>
    </citation>
    <scope>NUCLEOTIDE SEQUENCE [LARGE SCALE MRNA]</scope>
    <source>
        <strain>NOD</strain>
    </source>
</reference>
<reference key="3">
    <citation type="journal article" date="2009" name="PLoS Biol.">
        <title>Lineage-specific biology revealed by a finished genome assembly of the mouse.</title>
        <authorList>
            <person name="Church D.M."/>
            <person name="Goodstadt L."/>
            <person name="Hillier L.W."/>
            <person name="Zody M.C."/>
            <person name="Goldstein S."/>
            <person name="She X."/>
            <person name="Bult C.J."/>
            <person name="Agarwala R."/>
            <person name="Cherry J.L."/>
            <person name="DiCuccio M."/>
            <person name="Hlavina W."/>
            <person name="Kapustin Y."/>
            <person name="Meric P."/>
            <person name="Maglott D."/>
            <person name="Birtle Z."/>
            <person name="Marques A.C."/>
            <person name="Graves T."/>
            <person name="Zhou S."/>
            <person name="Teague B."/>
            <person name="Potamousis K."/>
            <person name="Churas C."/>
            <person name="Place M."/>
            <person name="Herschleb J."/>
            <person name="Runnheim R."/>
            <person name="Forrest D."/>
            <person name="Amos-Landgraf J."/>
            <person name="Schwartz D.C."/>
            <person name="Cheng Z."/>
            <person name="Lindblad-Toh K."/>
            <person name="Eichler E.E."/>
            <person name="Ponting C.P."/>
        </authorList>
    </citation>
    <scope>NUCLEOTIDE SEQUENCE [LARGE SCALE GENOMIC DNA]</scope>
    <source>
        <strain>C57BL/6J</strain>
    </source>
</reference>
<reference key="4">
    <citation type="submission" date="2005-09" db="EMBL/GenBank/DDBJ databases">
        <authorList>
            <person name="Mural R.J."/>
            <person name="Adams M.D."/>
            <person name="Myers E.W."/>
            <person name="Smith H.O."/>
            <person name="Venter J.C."/>
        </authorList>
    </citation>
    <scope>NUCLEOTIDE SEQUENCE [LARGE SCALE GENOMIC DNA]</scope>
</reference>
<reference key="5">
    <citation type="journal article" date="2004" name="Genome Res.">
        <title>The status, quality, and expansion of the NIH full-length cDNA project: the Mammalian Gene Collection (MGC).</title>
        <authorList>
            <consortium name="The MGC Project Team"/>
        </authorList>
    </citation>
    <scope>NUCLEOTIDE SEQUENCE [LARGE SCALE MRNA]</scope>
    <source>
        <tissue>Brain</tissue>
    </source>
</reference>
<reference key="6">
    <citation type="journal article" date="2009" name="Genes Dev.">
        <title>Essential and overlapping functions for mammalian Argonautes in microRNA silencing.</title>
        <authorList>
            <person name="Su H."/>
            <person name="Trombly M.I."/>
            <person name="Chen J."/>
            <person name="Wang X."/>
        </authorList>
    </citation>
    <scope>FUNCTION</scope>
</reference>
<comment type="function">
    <text evidence="3 5">Required for RNA-mediated gene silencing (RNAi). Binds to short RNAs such as microRNAs (miRNAs) and represses the translation of mRNAs which are complementary to them. Proposed to be involved in stabilization of small RNA derivates (siRNA) derived from processed RNA polymerase III-transcribed Alu repeats containing a DR2 retinoic acid response element (RARE) in stem cells and in the subsequent siRNA-dependent degradation of a subset of RNA polymerase II-transcribed coding mRNAs by recruiting a mRNA decapping complex involving EDC4 (PubMed:19174539). Possesses RNA slicer activity but only on select RNAs bearing 5'- and 3'-flanking sequences to the region of guide-target complementarity (By similarity).</text>
</comment>
<comment type="catalytic activity">
    <reaction evidence="1">
        <text>Endonucleolytic cleavage to 5'-phosphomonoester.</text>
        <dbReference type="EC" id="3.1.26.n2"/>
    </reaction>
</comment>
<comment type="subunit">
    <text evidence="3">Interacts with EIF4B, IMP8, PRMT5 and TNRC6B (By similarity). Interacts with APOBEC3F, APOBEC3G and APOBEC3H. Interacts with EDC4 (By similarity).</text>
</comment>
<comment type="subcellular location">
    <subcellularLocation>
        <location evidence="3">Cytoplasm</location>
        <location evidence="3">P-body</location>
    </subcellularLocation>
</comment>
<comment type="PTM">
    <text evidence="2">Ubiquitinated on surface-exposed lysines by a SCF-like E3 ubiquitin-protein ligase complex containing ZSWIM8 during target-directed microRNA degradation (TDMD), a process that mediates degradation of microRNAs (miRNAs). Ubiquitination by the SCF-like E3 ubiquitin-protein ligase complex containing ZSWIM8 leads to its subsequent degradation, thereby exposing miRNAs for degradation. ZSWIM8 recognizes and binds AGO3 when it is engaged with a TDMD target.</text>
</comment>
<comment type="similarity">
    <text evidence="3">Belongs to the argonaute family. Ago subfamily.</text>
</comment>
<keyword id="KW-0007">Acetylation</keyword>
<keyword id="KW-0963">Cytoplasm</keyword>
<keyword id="KW-0255">Endonuclease</keyword>
<keyword id="KW-0378">Hydrolase</keyword>
<keyword id="KW-0479">Metal-binding</keyword>
<keyword id="KW-0540">Nuclease</keyword>
<keyword id="KW-0597">Phosphoprotein</keyword>
<keyword id="KW-1185">Reference proteome</keyword>
<keyword id="KW-0687">Ribonucleoprotein</keyword>
<keyword id="KW-0694">RNA-binding</keyword>
<keyword id="KW-0943">RNA-mediated gene silencing</keyword>
<keyword id="KW-0810">Translation regulation</keyword>
<keyword id="KW-0832">Ubl conjugation</keyword>
<gene>
    <name type="primary">Ago3</name>
    <name type="synonym">Eif2c3</name>
</gene>
<protein>
    <recommendedName>
        <fullName evidence="3">Protein argonaute-3</fullName>
        <shortName evidence="3">Argonaute3</shortName>
        <shortName>mAgo3</shortName>
        <ecNumber evidence="1">3.1.26.n2</ecNumber>
    </recommendedName>
    <alternativeName>
        <fullName>Argonaute RISC catalytic component 3</fullName>
    </alternativeName>
    <alternativeName>
        <fullName evidence="3">Eukaryotic translation initiation factor 2C 3</fullName>
        <shortName evidence="3">eIF-2C 3</shortName>
        <shortName evidence="3">eIF2C 3</shortName>
    </alternativeName>
    <alternativeName>
        <fullName>Piwi/argonaute family protein meIF2C3</fullName>
    </alternativeName>
</protein>
<organism>
    <name type="scientific">Mus musculus</name>
    <name type="common">Mouse</name>
    <dbReference type="NCBI Taxonomy" id="10090"/>
    <lineage>
        <taxon>Eukaryota</taxon>
        <taxon>Metazoa</taxon>
        <taxon>Chordata</taxon>
        <taxon>Craniata</taxon>
        <taxon>Vertebrata</taxon>
        <taxon>Euteleostomi</taxon>
        <taxon>Mammalia</taxon>
        <taxon>Eutheria</taxon>
        <taxon>Euarchontoglires</taxon>
        <taxon>Glires</taxon>
        <taxon>Rodentia</taxon>
        <taxon>Myomorpha</taxon>
        <taxon>Muroidea</taxon>
        <taxon>Muridae</taxon>
        <taxon>Murinae</taxon>
        <taxon>Mus</taxon>
        <taxon>Mus</taxon>
    </lineage>
</organism>
<feature type="chain" id="PRO_0000194062" description="Protein argonaute-3">
    <location>
        <begin position="1"/>
        <end position="860"/>
    </location>
</feature>
<feature type="domain" description="PAZ" evidence="4">
    <location>
        <begin position="230"/>
        <end position="349"/>
    </location>
</feature>
<feature type="domain" description="Piwi" evidence="3">
    <location>
        <begin position="518"/>
        <end position="819"/>
    </location>
</feature>
<feature type="region of interest" description="Interaction with guide RNA" evidence="1">
    <location>
        <begin position="530"/>
        <end position="567"/>
    </location>
</feature>
<feature type="region of interest" description="Interaction with guide RNA" evidence="1">
    <location>
        <begin position="758"/>
        <end position="805"/>
    </location>
</feature>
<feature type="binding site" evidence="1">
    <location>
        <position position="598"/>
    </location>
    <ligand>
        <name>a divalent metal cation</name>
        <dbReference type="ChEBI" id="CHEBI:60240"/>
    </ligand>
</feature>
<feature type="binding site" evidence="1">
    <location>
        <position position="638"/>
    </location>
    <ligand>
        <name>a divalent metal cation</name>
        <dbReference type="ChEBI" id="CHEBI:60240"/>
    </ligand>
</feature>
<feature type="binding site" evidence="1">
    <location>
        <position position="670"/>
    </location>
    <ligand>
        <name>a divalent metal cation</name>
        <dbReference type="ChEBI" id="CHEBI:60240"/>
    </ligand>
</feature>
<feature type="binding site" evidence="1">
    <location>
        <position position="808"/>
    </location>
    <ligand>
        <name>a divalent metal cation</name>
        <dbReference type="ChEBI" id="CHEBI:60240"/>
    </ligand>
</feature>
<feature type="modified residue" description="N-acetylmethionine" evidence="1">
    <location>
        <position position="1"/>
    </location>
</feature>
<feature type="modified residue" description="Phosphoserine" evidence="1">
    <location>
        <position position="825"/>
    </location>
</feature>
<feature type="sequence conflict" description="In Ref. 1; BAC15768." evidence="6" ref="1">
    <original>M</original>
    <variation>K</variation>
    <location>
        <position position="70"/>
    </location>
</feature>
<feature type="sequence conflict" description="In Ref. 1; BAC15768." evidence="6" ref="1">
    <original>F</original>
    <variation>L</variation>
    <location>
        <position position="400"/>
    </location>
</feature>
<proteinExistence type="evidence at transcript level"/>
<name>AGO3_MOUSE</name>
<evidence type="ECO:0000250" key="1">
    <source>
        <dbReference type="UniProtKB" id="Q9H9G7"/>
    </source>
</evidence>
<evidence type="ECO:0000250" key="2">
    <source>
        <dbReference type="UniProtKB" id="Q9UKV8"/>
    </source>
</evidence>
<evidence type="ECO:0000255" key="3">
    <source>
        <dbReference type="HAMAP-Rule" id="MF_03032"/>
    </source>
</evidence>
<evidence type="ECO:0000255" key="4">
    <source>
        <dbReference type="PROSITE-ProRule" id="PRU00142"/>
    </source>
</evidence>
<evidence type="ECO:0000269" key="5">
    <source>
    </source>
</evidence>
<evidence type="ECO:0000305" key="6"/>
<accession>Q8CJF9</accession>
<accession>Q3TBP7</accession>